<accession>B0K3Y2</accession>
<keyword id="KW-0678">Repressor</keyword>
<keyword id="KW-0346">Stress response</keyword>
<keyword id="KW-0804">Transcription</keyword>
<keyword id="KW-0805">Transcription regulation</keyword>
<feature type="chain" id="PRO_1000092835" description="Heat-inducible transcription repressor HrcA">
    <location>
        <begin position="1"/>
        <end position="343"/>
    </location>
</feature>
<dbReference type="EMBL" id="CP000923">
    <property type="protein sequence ID" value="ABY93353.1"/>
    <property type="molecule type" value="Genomic_DNA"/>
</dbReference>
<dbReference type="RefSeq" id="WP_009052598.1">
    <property type="nucleotide sequence ID" value="NC_010320.1"/>
</dbReference>
<dbReference type="SMR" id="B0K3Y2"/>
<dbReference type="KEGG" id="tex:Teth514_2081"/>
<dbReference type="HOGENOM" id="CLU_050019_1_0_9"/>
<dbReference type="Proteomes" id="UP000002155">
    <property type="component" value="Chromosome"/>
</dbReference>
<dbReference type="GO" id="GO:0003677">
    <property type="term" value="F:DNA binding"/>
    <property type="evidence" value="ECO:0007669"/>
    <property type="project" value="InterPro"/>
</dbReference>
<dbReference type="GO" id="GO:0045892">
    <property type="term" value="P:negative regulation of DNA-templated transcription"/>
    <property type="evidence" value="ECO:0007669"/>
    <property type="project" value="UniProtKB-UniRule"/>
</dbReference>
<dbReference type="FunFam" id="1.10.10.10:FF:000049">
    <property type="entry name" value="Heat-inducible transcription repressor HrcA"/>
    <property type="match status" value="1"/>
</dbReference>
<dbReference type="Gene3D" id="3.30.450.40">
    <property type="match status" value="1"/>
</dbReference>
<dbReference type="Gene3D" id="3.30.390.60">
    <property type="entry name" value="Heat-inducible transcription repressor hrca homolog, domain 3"/>
    <property type="match status" value="1"/>
</dbReference>
<dbReference type="Gene3D" id="1.10.10.10">
    <property type="entry name" value="Winged helix-like DNA-binding domain superfamily/Winged helix DNA-binding domain"/>
    <property type="match status" value="1"/>
</dbReference>
<dbReference type="HAMAP" id="MF_00081">
    <property type="entry name" value="HrcA"/>
    <property type="match status" value="1"/>
</dbReference>
<dbReference type="InterPro" id="IPR029016">
    <property type="entry name" value="GAF-like_dom_sf"/>
</dbReference>
<dbReference type="InterPro" id="IPR002571">
    <property type="entry name" value="HrcA"/>
</dbReference>
<dbReference type="InterPro" id="IPR021153">
    <property type="entry name" value="HrcA_C"/>
</dbReference>
<dbReference type="InterPro" id="IPR036388">
    <property type="entry name" value="WH-like_DNA-bd_sf"/>
</dbReference>
<dbReference type="InterPro" id="IPR036390">
    <property type="entry name" value="WH_DNA-bd_sf"/>
</dbReference>
<dbReference type="InterPro" id="IPR023120">
    <property type="entry name" value="WHTH_transcript_rep_HrcA_IDD"/>
</dbReference>
<dbReference type="NCBIfam" id="TIGR00331">
    <property type="entry name" value="hrcA"/>
    <property type="match status" value="1"/>
</dbReference>
<dbReference type="PANTHER" id="PTHR34824">
    <property type="entry name" value="HEAT-INDUCIBLE TRANSCRIPTION REPRESSOR HRCA"/>
    <property type="match status" value="1"/>
</dbReference>
<dbReference type="PANTHER" id="PTHR34824:SF1">
    <property type="entry name" value="HEAT-INDUCIBLE TRANSCRIPTION REPRESSOR HRCA"/>
    <property type="match status" value="1"/>
</dbReference>
<dbReference type="Pfam" id="PF01628">
    <property type="entry name" value="HrcA"/>
    <property type="match status" value="1"/>
</dbReference>
<dbReference type="PIRSF" id="PIRSF005485">
    <property type="entry name" value="HrcA"/>
    <property type="match status" value="1"/>
</dbReference>
<dbReference type="SUPFAM" id="SSF55781">
    <property type="entry name" value="GAF domain-like"/>
    <property type="match status" value="1"/>
</dbReference>
<dbReference type="SUPFAM" id="SSF46785">
    <property type="entry name" value="Winged helix' DNA-binding domain"/>
    <property type="match status" value="1"/>
</dbReference>
<organism>
    <name type="scientific">Thermoanaerobacter sp. (strain X514)</name>
    <dbReference type="NCBI Taxonomy" id="399726"/>
    <lineage>
        <taxon>Bacteria</taxon>
        <taxon>Bacillati</taxon>
        <taxon>Bacillota</taxon>
        <taxon>Clostridia</taxon>
        <taxon>Thermoanaerobacterales</taxon>
        <taxon>Thermoanaerobacteraceae</taxon>
        <taxon>Thermoanaerobacter</taxon>
    </lineage>
</organism>
<reference key="1">
    <citation type="submission" date="2008-01" db="EMBL/GenBank/DDBJ databases">
        <title>Complete sequence of Thermoanaerobacter sp. X514.</title>
        <authorList>
            <consortium name="US DOE Joint Genome Institute"/>
            <person name="Copeland A."/>
            <person name="Lucas S."/>
            <person name="Lapidus A."/>
            <person name="Barry K."/>
            <person name="Glavina del Rio T."/>
            <person name="Dalin E."/>
            <person name="Tice H."/>
            <person name="Pitluck S."/>
            <person name="Bruce D."/>
            <person name="Goodwin L."/>
            <person name="Saunders E."/>
            <person name="Brettin T."/>
            <person name="Detter J.C."/>
            <person name="Han C."/>
            <person name="Schmutz J."/>
            <person name="Larimer F."/>
            <person name="Land M."/>
            <person name="Hauser L."/>
            <person name="Kyrpides N."/>
            <person name="Kim E."/>
            <person name="Hemme C."/>
            <person name="Fields M.W."/>
            <person name="He Z."/>
            <person name="Zhou J."/>
            <person name="Richardson P."/>
        </authorList>
    </citation>
    <scope>NUCLEOTIDE SEQUENCE [LARGE SCALE GENOMIC DNA]</scope>
    <source>
        <strain>X514</strain>
    </source>
</reference>
<sequence>MPLDDRKKKILYAVITDYIMTAEPIGSRTIAKKYNIGLSSATIRNEMADLEEMGYLEQPHTSAGRIPSDKGYRFYVDSILRNYINNEPPISYNTREEIIAEFDEIVKKYAKILANITHHTTVAKMPKLNPDRIKRIQLIPVASNKMIFLVVTDTGIVKNYLLNLCQNVDRTIFEFLNNLLNEKIAGKNEKDVFEFLQQDLRHMLGEMVFIADELINTILLSLKQLQETDIYADGTSHILDFPEYKDLSKAKNFFNLLDNKSLLNEILEPEVDFIDVRIGSENKFEEMKDLSVIKTTYKINGRVVGTIGIIGPTRMDYRKLINEINVMTKELSNLLSNIYNDEI</sequence>
<gene>
    <name evidence="1" type="primary">hrcA</name>
    <name type="ordered locus">Teth514_2081</name>
</gene>
<proteinExistence type="inferred from homology"/>
<name>HRCA_THEPX</name>
<evidence type="ECO:0000255" key="1">
    <source>
        <dbReference type="HAMAP-Rule" id="MF_00081"/>
    </source>
</evidence>
<protein>
    <recommendedName>
        <fullName evidence="1">Heat-inducible transcription repressor HrcA</fullName>
    </recommendedName>
</protein>
<comment type="function">
    <text evidence="1">Negative regulator of class I heat shock genes (grpE-dnaK-dnaJ and groELS operons). Prevents heat-shock induction of these operons.</text>
</comment>
<comment type="similarity">
    <text evidence="1">Belongs to the HrcA family.</text>
</comment>